<name>SYR_AROAE</name>
<reference key="1">
    <citation type="journal article" date="2005" name="Arch. Microbiol.">
        <title>The genome sequence of an anaerobic aromatic-degrading denitrifying bacterium, strain EbN1.</title>
        <authorList>
            <person name="Rabus R."/>
            <person name="Kube M."/>
            <person name="Heider J."/>
            <person name="Beck A."/>
            <person name="Heitmann K."/>
            <person name="Widdel F."/>
            <person name="Reinhardt R."/>
        </authorList>
    </citation>
    <scope>NUCLEOTIDE SEQUENCE [LARGE SCALE GENOMIC DNA]</scope>
    <source>
        <strain>DSM 19018 / LMG 30748 / EbN1</strain>
    </source>
</reference>
<protein>
    <recommendedName>
        <fullName evidence="1">Arginine--tRNA ligase</fullName>
        <ecNumber evidence="1">6.1.1.19</ecNumber>
    </recommendedName>
    <alternativeName>
        <fullName evidence="1">Arginyl-tRNA synthetase</fullName>
        <shortName evidence="1">ArgRS</shortName>
    </alternativeName>
</protein>
<keyword id="KW-0030">Aminoacyl-tRNA synthetase</keyword>
<keyword id="KW-0067">ATP-binding</keyword>
<keyword id="KW-0963">Cytoplasm</keyword>
<keyword id="KW-0436">Ligase</keyword>
<keyword id="KW-0547">Nucleotide-binding</keyword>
<keyword id="KW-0648">Protein biosynthesis</keyword>
<keyword id="KW-1185">Reference proteome</keyword>
<evidence type="ECO:0000255" key="1">
    <source>
        <dbReference type="HAMAP-Rule" id="MF_00123"/>
    </source>
</evidence>
<accession>Q5P3E7</accession>
<feature type="chain" id="PRO_0000241978" description="Arginine--tRNA ligase">
    <location>
        <begin position="1"/>
        <end position="587"/>
    </location>
</feature>
<feature type="short sequence motif" description="'HIGH' region">
    <location>
        <begin position="126"/>
        <end position="136"/>
    </location>
</feature>
<proteinExistence type="inferred from homology"/>
<comment type="catalytic activity">
    <reaction evidence="1">
        <text>tRNA(Arg) + L-arginine + ATP = L-arginyl-tRNA(Arg) + AMP + diphosphate</text>
        <dbReference type="Rhea" id="RHEA:20301"/>
        <dbReference type="Rhea" id="RHEA-COMP:9658"/>
        <dbReference type="Rhea" id="RHEA-COMP:9673"/>
        <dbReference type="ChEBI" id="CHEBI:30616"/>
        <dbReference type="ChEBI" id="CHEBI:32682"/>
        <dbReference type="ChEBI" id="CHEBI:33019"/>
        <dbReference type="ChEBI" id="CHEBI:78442"/>
        <dbReference type="ChEBI" id="CHEBI:78513"/>
        <dbReference type="ChEBI" id="CHEBI:456215"/>
        <dbReference type="EC" id="6.1.1.19"/>
    </reaction>
</comment>
<comment type="subunit">
    <text evidence="1">Monomer.</text>
</comment>
<comment type="subcellular location">
    <subcellularLocation>
        <location evidence="1">Cytoplasm</location>
    </subcellularLocation>
</comment>
<comment type="similarity">
    <text evidence="1">Belongs to the class-I aminoacyl-tRNA synthetase family.</text>
</comment>
<sequence length="587" mass="64854">MSADSKVQLTALLRAALKSIAPELADTPIHLERPKQAGHGDFATNLALQLAKPLRRRPRELAELLLAELPRSTLVAATEVAGAGFINFTLAAGAKTAAVGTVLERGAEFGRGARNGTSVQLEFVSANPTGPLHVGHGRGAAYGASLAAVLDFAGSDVTREYYINDAGRQMDILALSTWLRYLALYGLDIPFPPNAYQGDYVVDMARAMREGHQDRFAGFTIEQVLEGAPGLPVAERKDDEAKTQREDHLDMLIANAKRLLGEDYHFVHGFALNEQLGDGRDDLEEFGVHFDKWFSEKSLFDTGLVDRAVAELEKRGHVYLQDGAKWFRSTAFGDEKDRVVQRENGLYTYFASDIAYHLNKYERGYDRIIDIWGADHHGYIPRVKGAIAALGLPPEKLEVALVQFAVLYRNGQKASMSTRSGEFVTLRELRREVGNDACRFFYVLRKSDQHLDFDLDLAKSQSNENPVYYVQYAHARVCSVLEQWGGEAAELRAAQLDLLGNERELALCARLGGFPELIQNAAADHAPHQIAFYLKDLAAEFHSWYNAERMLVDDPALRLARLALATAVRQVLATALALLGVSAPQSM</sequence>
<dbReference type="EC" id="6.1.1.19" evidence="1"/>
<dbReference type="EMBL" id="CR555306">
    <property type="protein sequence ID" value="CAI08167.1"/>
    <property type="molecule type" value="Genomic_DNA"/>
</dbReference>
<dbReference type="RefSeq" id="WP_011237860.1">
    <property type="nucleotide sequence ID" value="NC_006513.1"/>
</dbReference>
<dbReference type="SMR" id="Q5P3E7"/>
<dbReference type="STRING" id="76114.ebA3614"/>
<dbReference type="KEGG" id="eba:ebA3614"/>
<dbReference type="eggNOG" id="COG0018">
    <property type="taxonomic scope" value="Bacteria"/>
</dbReference>
<dbReference type="HOGENOM" id="CLU_006406_0_1_4"/>
<dbReference type="OrthoDB" id="9803211at2"/>
<dbReference type="Proteomes" id="UP000006552">
    <property type="component" value="Chromosome"/>
</dbReference>
<dbReference type="GO" id="GO:0005737">
    <property type="term" value="C:cytoplasm"/>
    <property type="evidence" value="ECO:0007669"/>
    <property type="project" value="UniProtKB-SubCell"/>
</dbReference>
<dbReference type="GO" id="GO:0004814">
    <property type="term" value="F:arginine-tRNA ligase activity"/>
    <property type="evidence" value="ECO:0007669"/>
    <property type="project" value="UniProtKB-UniRule"/>
</dbReference>
<dbReference type="GO" id="GO:0005524">
    <property type="term" value="F:ATP binding"/>
    <property type="evidence" value="ECO:0007669"/>
    <property type="project" value="UniProtKB-UniRule"/>
</dbReference>
<dbReference type="GO" id="GO:0006420">
    <property type="term" value="P:arginyl-tRNA aminoacylation"/>
    <property type="evidence" value="ECO:0007669"/>
    <property type="project" value="UniProtKB-UniRule"/>
</dbReference>
<dbReference type="CDD" id="cd00671">
    <property type="entry name" value="ArgRS_core"/>
    <property type="match status" value="1"/>
</dbReference>
<dbReference type="FunFam" id="1.10.730.10:FF:000008">
    <property type="entry name" value="Arginine--tRNA ligase"/>
    <property type="match status" value="1"/>
</dbReference>
<dbReference type="Gene3D" id="3.30.1360.70">
    <property type="entry name" value="Arginyl tRNA synthetase N-terminal domain"/>
    <property type="match status" value="1"/>
</dbReference>
<dbReference type="Gene3D" id="3.40.50.620">
    <property type="entry name" value="HUPs"/>
    <property type="match status" value="1"/>
</dbReference>
<dbReference type="Gene3D" id="1.10.730.10">
    <property type="entry name" value="Isoleucyl-tRNA Synthetase, Domain 1"/>
    <property type="match status" value="1"/>
</dbReference>
<dbReference type="HAMAP" id="MF_00123">
    <property type="entry name" value="Arg_tRNA_synth"/>
    <property type="match status" value="1"/>
</dbReference>
<dbReference type="InterPro" id="IPR001412">
    <property type="entry name" value="aa-tRNA-synth_I_CS"/>
</dbReference>
<dbReference type="InterPro" id="IPR001278">
    <property type="entry name" value="Arg-tRNA-ligase"/>
</dbReference>
<dbReference type="InterPro" id="IPR005148">
    <property type="entry name" value="Arg-tRNA-synth_N"/>
</dbReference>
<dbReference type="InterPro" id="IPR036695">
    <property type="entry name" value="Arg-tRNA-synth_N_sf"/>
</dbReference>
<dbReference type="InterPro" id="IPR035684">
    <property type="entry name" value="ArgRS_core"/>
</dbReference>
<dbReference type="InterPro" id="IPR008909">
    <property type="entry name" value="DALR_anticod-bd"/>
</dbReference>
<dbReference type="InterPro" id="IPR014729">
    <property type="entry name" value="Rossmann-like_a/b/a_fold"/>
</dbReference>
<dbReference type="InterPro" id="IPR009080">
    <property type="entry name" value="tRNAsynth_Ia_anticodon-bd"/>
</dbReference>
<dbReference type="NCBIfam" id="TIGR00456">
    <property type="entry name" value="argS"/>
    <property type="match status" value="1"/>
</dbReference>
<dbReference type="PANTHER" id="PTHR11956:SF5">
    <property type="entry name" value="ARGININE--TRNA LIGASE, CYTOPLASMIC"/>
    <property type="match status" value="1"/>
</dbReference>
<dbReference type="PANTHER" id="PTHR11956">
    <property type="entry name" value="ARGINYL-TRNA SYNTHETASE"/>
    <property type="match status" value="1"/>
</dbReference>
<dbReference type="Pfam" id="PF03485">
    <property type="entry name" value="Arg_tRNA_synt_N"/>
    <property type="match status" value="1"/>
</dbReference>
<dbReference type="Pfam" id="PF05746">
    <property type="entry name" value="DALR_1"/>
    <property type="match status" value="1"/>
</dbReference>
<dbReference type="Pfam" id="PF00750">
    <property type="entry name" value="tRNA-synt_1d"/>
    <property type="match status" value="2"/>
</dbReference>
<dbReference type="PRINTS" id="PR01038">
    <property type="entry name" value="TRNASYNTHARG"/>
</dbReference>
<dbReference type="SMART" id="SM01016">
    <property type="entry name" value="Arg_tRNA_synt_N"/>
    <property type="match status" value="1"/>
</dbReference>
<dbReference type="SMART" id="SM00836">
    <property type="entry name" value="DALR_1"/>
    <property type="match status" value="1"/>
</dbReference>
<dbReference type="SUPFAM" id="SSF47323">
    <property type="entry name" value="Anticodon-binding domain of a subclass of class I aminoacyl-tRNA synthetases"/>
    <property type="match status" value="1"/>
</dbReference>
<dbReference type="SUPFAM" id="SSF55190">
    <property type="entry name" value="Arginyl-tRNA synthetase (ArgRS), N-terminal 'additional' domain"/>
    <property type="match status" value="1"/>
</dbReference>
<dbReference type="SUPFAM" id="SSF52374">
    <property type="entry name" value="Nucleotidylyl transferase"/>
    <property type="match status" value="1"/>
</dbReference>
<dbReference type="PROSITE" id="PS00178">
    <property type="entry name" value="AA_TRNA_LIGASE_I"/>
    <property type="match status" value="1"/>
</dbReference>
<organism>
    <name type="scientific">Aromatoleum aromaticum (strain DSM 19018 / LMG 30748 / EbN1)</name>
    <name type="common">Azoarcus sp. (strain EbN1)</name>
    <dbReference type="NCBI Taxonomy" id="76114"/>
    <lineage>
        <taxon>Bacteria</taxon>
        <taxon>Pseudomonadati</taxon>
        <taxon>Pseudomonadota</taxon>
        <taxon>Betaproteobacteria</taxon>
        <taxon>Rhodocyclales</taxon>
        <taxon>Rhodocyclaceae</taxon>
        <taxon>Aromatoleum</taxon>
    </lineage>
</organism>
<gene>
    <name evidence="1" type="primary">argS</name>
    <name type="ordered locus">AZOSEA20420</name>
    <name type="ORF">ebA3614</name>
</gene>